<reference key="1">
    <citation type="journal article" date="1993" name="Science">
        <title>GDNF: a glial cell line-derived neurotrophic factor for midbrain dopaminergic neurons.</title>
        <authorList>
            <person name="Lin L.-F.H."/>
            <person name="Doherty D.H."/>
            <person name="Lile J.D."/>
            <person name="Bektesh S."/>
            <person name="Collins F."/>
        </authorList>
    </citation>
    <scope>NUCLEOTIDE SEQUENCE [MRNA] (ISOFORM 1)</scope>
    <scope>HOMODIMERIZATION</scope>
    <scope>DISULFIDE BONDS</scope>
    <scope>GLYCOSYLATION</scope>
    <scope>PROTEIN SEQUENCE OF 78-102</scope>
    <source>
        <tissue>Glial tumor</tissue>
    </source>
</reference>
<reference key="2">
    <citation type="journal article" date="1995" name="Exp. Neurol.">
        <title>cDNA sequence and differential mRNA regulation of two forms of glial cell line-derived neurotrophic factor in Schwann cells and rat skeletal muscle.</title>
        <authorList>
            <person name="Springer J.E."/>
            <person name="Seeburger J.L."/>
            <person name="He J."/>
            <person name="Gabrea A."/>
            <person name="Blankenhorn E.P."/>
            <person name="Bergman L.W."/>
        </authorList>
    </citation>
    <scope>NUCLEOTIDE SEQUENCE [MRNA] (ISOFORMS 1 AND 2)</scope>
</reference>
<reference key="3">
    <citation type="journal article" date="2000" name="Neuroscience">
        <title>Anterograde axonal transport of glial cell line-derived neurotrophic factor and its receptors in rat hypoglossal nerve.</title>
        <authorList>
            <person name="Russell F.D."/>
            <person name="Koishi K."/>
            <person name="Jiang Y."/>
            <person name="McLennan I.S."/>
        </authorList>
    </citation>
    <scope>NUCLEOTIDE SEQUENCE [MRNA] OF 1-125 (ISOFORMS 1; 2 AND 3)</scope>
    <scope>FUNCTION</scope>
    <scope>TISSUE SPECIFICITY</scope>
    <source>
        <strain>Wistar</strain>
        <tissue>Brain</tissue>
    </source>
</reference>
<reference key="4">
    <citation type="journal article" date="1994" name="NeuroReport">
        <title>GDNF is expressed in two forms in many tissues outside the CNS.</title>
        <authorList>
            <person name="Suter-Crazzolara C."/>
            <person name="Unsicker K."/>
        </authorList>
    </citation>
    <scope>NUCLEOTIDE SEQUENCE [MRNA] OF 1-76 (ISOFORM 2)</scope>
    <scope>ALTERNATIVE SPLICING</scope>
    <scope>TISSUE SPECIFICITY</scope>
    <source>
        <strain>Wistar</strain>
        <tissue>Kidney</tissue>
    </source>
</reference>
<reference key="5">
    <citation type="submission" date="1998-09" db="EMBL/GenBank/DDBJ databases">
        <title>The Rat GDNF gene.</title>
        <authorList>
            <person name="Schmidt C."/>
            <person name="Suter-Crazzolara C."/>
        </authorList>
    </citation>
    <scope>NUCLEOTIDE SEQUENCE [GENOMIC DNA] OF 1-50</scope>
</reference>
<reference key="6">
    <citation type="journal article" date="2002" name="NeuroReport">
        <title>Induction of GDNF mRNA expression by melatonin in rat C6 glioma cells.</title>
        <authorList>
            <person name="Armstrong K.J."/>
            <person name="Niles L.P."/>
        </authorList>
    </citation>
    <scope>NUCLEOTIDE SEQUENCE [MRNA] OF 9-207 (ISOFORM 1)</scope>
    <scope>INDUCTION</scope>
    <source>
        <tissue>Glial tumor</tissue>
    </source>
</reference>
<reference key="7">
    <citation type="journal article" date="1994" name="Exp. Neurol.">
        <title>Multiple astrocyte transcripts encode nigral trophic factors in rat and human.</title>
        <authorList>
            <person name="Schaar D.G."/>
            <person name="Sieber B.-A."/>
            <person name="Sherwood A.C."/>
            <person name="Dean D."/>
            <person name="Mendoza G."/>
            <person name="Ramakrishnan L."/>
            <person name="Dreyfus C.F."/>
            <person name="Black I.B."/>
        </authorList>
    </citation>
    <scope>ALTERNATIVE SPLICING</scope>
    <scope>TISSUE SPECIFICITY</scope>
</reference>
<reference key="8">
    <citation type="journal article" date="2011" name="J. Biol. Chem.">
        <title>Sorting protein-related receptor SorLA controls regulated secretion of glial cell line-derived neurotrophic factor.</title>
        <authorList>
            <person name="Geng Z."/>
            <person name="Xu F.Y."/>
            <person name="Huang S.H."/>
            <person name="Chen Z.Y."/>
        </authorList>
    </citation>
    <scope>INTERACTION WITH SORL1</scope>
</reference>
<reference key="9">
    <citation type="journal article" date="1997" name="Nat. Struct. Biol.">
        <title>X-ray structure of glial cell-derived neurotrophic factor at 1.9-A resolution and implications for receptor binding.</title>
        <authorList>
            <person name="Eigenbrot C."/>
            <person name="Gerber C."/>
        </authorList>
    </citation>
    <scope>X-RAY CRYSTALLOGRAPHY (1.9 ANGSTROMS)</scope>
</reference>
<protein>
    <recommendedName>
        <fullName>Glial cell line-derived neurotrophic factor</fullName>
    </recommendedName>
    <alternativeName>
        <fullName>Astrocyte-derived trophic factor</fullName>
        <shortName>ATF</shortName>
    </alternativeName>
</protein>
<evidence type="ECO:0000250" key="1">
    <source>
        <dbReference type="UniProtKB" id="P39905"/>
    </source>
</evidence>
<evidence type="ECO:0000255" key="2"/>
<evidence type="ECO:0000256" key="3">
    <source>
        <dbReference type="SAM" id="MobiDB-lite"/>
    </source>
</evidence>
<evidence type="ECO:0000269" key="4">
    <source>
    </source>
</evidence>
<evidence type="ECO:0000269" key="5">
    <source>
    </source>
</evidence>
<evidence type="ECO:0000269" key="6">
    <source>
    </source>
</evidence>
<evidence type="ECO:0000269" key="7">
    <source>
    </source>
</evidence>
<evidence type="ECO:0000269" key="8">
    <source>
    </source>
</evidence>
<evidence type="ECO:0000303" key="9">
    <source>
    </source>
</evidence>
<evidence type="ECO:0000303" key="10">
    <source>
    </source>
</evidence>
<evidence type="ECO:0000303" key="11">
    <source>
    </source>
</evidence>
<evidence type="ECO:0000305" key="12"/>
<evidence type="ECO:0000305" key="13">
    <source>
    </source>
</evidence>
<evidence type="ECO:0007829" key="14">
    <source>
        <dbReference type="PDB" id="1AGQ"/>
    </source>
</evidence>
<organism>
    <name type="scientific">Rattus norvegicus</name>
    <name type="common">Rat</name>
    <dbReference type="NCBI Taxonomy" id="10116"/>
    <lineage>
        <taxon>Eukaryota</taxon>
        <taxon>Metazoa</taxon>
        <taxon>Chordata</taxon>
        <taxon>Craniata</taxon>
        <taxon>Vertebrata</taxon>
        <taxon>Euteleostomi</taxon>
        <taxon>Mammalia</taxon>
        <taxon>Eutheria</taxon>
        <taxon>Euarchontoglires</taxon>
        <taxon>Glires</taxon>
        <taxon>Rodentia</taxon>
        <taxon>Myomorpha</taxon>
        <taxon>Muroidea</taxon>
        <taxon>Muridae</taxon>
        <taxon>Murinae</taxon>
        <taxon>Rattus</taxon>
    </lineage>
</organism>
<gene>
    <name type="primary">Gdnf</name>
</gene>
<accession>Q07731</accession>
<accession>Q63214</accession>
<accession>Q64062</accession>
<accession>Q64063</accession>
<accession>Q8R485</accession>
<accession>Q9QX94</accession>
<accession>Q9QX95</accession>
<accession>Q9QXJ7</accession>
<accession>Q9QXJ8</accession>
<accession>Q9QXJ9</accession>
<proteinExistence type="evidence at protein level"/>
<comment type="function">
    <text evidence="1 4">Neurotrophic factor that enhances survival and morphological differentiation of dopaminergic neurons and increases their high-affinity dopamine uptake (PubMed:10828539). Acts by binding to its coreceptor, GFRA1, leading to autophosphorylation and activation of the RET receptor (By similarity). May also modulate local neuronal effects in distal regions of the motor neuron (PubMed:10828539). Involved in the development of the neural crest (By similarity).</text>
</comment>
<comment type="subunit">
    <text evidence="1 6 8">Homodimer; disulfide-linked (PubMed:8493557). Interacts with GFRA1 coreceptor and RET: forms a 2:2:2 ternary complex composed of GDNF ligand, GFRA1 and RET receptor (By similarity). Interacts (via propeptide) with SORL1 (via N-terminal ectodomain); this interaction affects GDNF-regulated, but not constitutive secretion (PubMed:21994944). Also interacts with SORL1 in complex with GFRA1; this interaction leads to GDNF endocytosis and lysosomal degradation (By similarity).</text>
</comment>
<comment type="subcellular location">
    <subcellularLocation>
        <location evidence="1">Secreted</location>
    </subcellularLocation>
</comment>
<comment type="alternative products">
    <event type="alternative splicing"/>
    <isoform>
        <id>Q07731-1</id>
        <name>1</name>
        <name>GDNF633</name>
        <sequence type="displayed"/>
    </isoform>
    <isoform>
        <id>Q07731-2</id>
        <name>2</name>
        <name>ATF-1</name>
        <name>GDNF555</name>
        <name>sGDNF</name>
        <name>Smaller GDNF</name>
        <sequence type="described" ref="VSP_006422"/>
    </isoform>
    <isoform>
        <id>Q07731-3</id>
        <name>3</name>
        <sequence type="described" ref="VSP_026365"/>
    </isoform>
    <isoform>
        <id>Q07731-4</id>
        <name>4</name>
        <sequence type="described" ref="VSP_026366"/>
    </isoform>
</comment>
<comment type="tissue specificity">
    <text evidence="4 6 7">Expressed in both the central nervous system (CNS) and in non-CNS tissues, including the kidney, lung, bone, heart, liver, spleen, sciatic nerve and blood (PubMed:7696586). Expressed in brain (at protein level) (PubMed:21994944). Localizes at the proximal ligature of the hypoglossal nerve (PubMed:10828539).</text>
</comment>
<comment type="induction">
    <text evidence="5">By melatonin.</text>
</comment>
<comment type="similarity">
    <text evidence="12">Belongs to the TGF-beta family. GDNF subfamily.</text>
</comment>
<comment type="sequence caution" evidence="12">
    <conflict type="erroneous gene model prediction">
        <sequence resource="EMBL-CDS" id="CAB64357"/>
    </conflict>
</comment>
<comment type="sequence caution" evidence="12">
    <conflict type="erroneous gene model prediction">
        <sequence resource="EMBL-CDS" id="CAB64358"/>
    </conflict>
</comment>
<sequence>MKLWDVVAVCLVLLHTASAFPLPAGKRLLEAPAEDHSLGHRRVPFALTSDSNMPEDYPDQFDDVMDFIQATIKRLKRSPDKQAAALPRRERNRQAAAASPENSRGKGRRGQRGKNRGCVLTAIHLNVTDLGLGYETKEELIFRYCSGSCEAAETMYDKILKNLSRSRRLTSDKVGQACCRPVAFDDDLSFLDDSLVYHILRKHSAKRCGCI</sequence>
<dbReference type="EMBL" id="L15305">
    <property type="protein sequence ID" value="AAA67909.1"/>
    <property type="molecule type" value="mRNA"/>
</dbReference>
<dbReference type="EMBL" id="S75583">
    <property type="protein sequence ID" value="AAB33891.1"/>
    <property type="molecule type" value="mRNA"/>
</dbReference>
<dbReference type="EMBL" id="S75585">
    <property type="protein sequence ID" value="AAB33892.1"/>
    <property type="molecule type" value="mRNA"/>
</dbReference>
<dbReference type="EMBL" id="AF205713">
    <property type="protein sequence ID" value="AAF23767.1"/>
    <property type="molecule type" value="mRNA"/>
</dbReference>
<dbReference type="EMBL" id="AF205714">
    <property type="protein sequence ID" value="AAF23768.1"/>
    <property type="molecule type" value="mRNA"/>
</dbReference>
<dbReference type="EMBL" id="AF205715">
    <property type="protein sequence ID" value="AAF23769.1"/>
    <property type="molecule type" value="mRNA"/>
</dbReference>
<dbReference type="EMBL" id="X92495">
    <property type="protein sequence ID" value="CAA63237.1"/>
    <property type="molecule type" value="mRNA"/>
</dbReference>
<dbReference type="EMBL" id="AJ011432">
    <property type="protein sequence ID" value="CAB64357.1"/>
    <property type="status" value="ALT_SEQ"/>
    <property type="molecule type" value="Genomic_DNA"/>
</dbReference>
<dbReference type="EMBL" id="AJ011432">
    <property type="protein sequence ID" value="CAB64358.1"/>
    <property type="status" value="ALT_SEQ"/>
    <property type="molecule type" value="Genomic_DNA"/>
</dbReference>
<dbReference type="EMBL" id="AF497634">
    <property type="protein sequence ID" value="AAM18096.1"/>
    <property type="molecule type" value="mRNA"/>
</dbReference>
<dbReference type="PIR" id="A37499">
    <property type="entry name" value="A37499"/>
</dbReference>
<dbReference type="RefSeq" id="NP_062012.1">
    <property type="nucleotide sequence ID" value="NM_019139.1"/>
</dbReference>
<dbReference type="PDB" id="1AGQ">
    <property type="method" value="X-ray"/>
    <property type="resolution" value="1.90 A"/>
    <property type="chains" value="A/B/C/D=78-211"/>
</dbReference>
<dbReference type="PDBsum" id="1AGQ"/>
<dbReference type="SMR" id="Q07731"/>
<dbReference type="BioGRID" id="247487">
    <property type="interactions" value="2"/>
</dbReference>
<dbReference type="FunCoup" id="Q07731">
    <property type="interactions" value="371"/>
</dbReference>
<dbReference type="STRING" id="10116.ENSRNOP00000044012"/>
<dbReference type="GlyCosmos" id="Q07731">
    <property type="glycosylation" value="2 sites, No reported glycans"/>
</dbReference>
<dbReference type="GlyGen" id="Q07731">
    <property type="glycosylation" value="2 sites"/>
</dbReference>
<dbReference type="PhosphoSitePlus" id="Q07731"/>
<dbReference type="PaxDb" id="10116-ENSRNOP00000044012"/>
<dbReference type="GeneID" id="25453"/>
<dbReference type="KEGG" id="rno:25453"/>
<dbReference type="AGR" id="RGD:2677"/>
<dbReference type="CTD" id="2668"/>
<dbReference type="RGD" id="2677">
    <property type="gene designation" value="Gdnf"/>
</dbReference>
<dbReference type="eggNOG" id="ENOG502QWCH">
    <property type="taxonomic scope" value="Eukaryota"/>
</dbReference>
<dbReference type="InParanoid" id="Q07731"/>
<dbReference type="PhylomeDB" id="Q07731"/>
<dbReference type="Reactome" id="R-RNO-5673001">
    <property type="pathway name" value="RAF/MAP kinase cascade"/>
</dbReference>
<dbReference type="Reactome" id="R-RNO-8853659">
    <property type="pathway name" value="RET signaling"/>
</dbReference>
<dbReference type="EvolutionaryTrace" id="Q07731"/>
<dbReference type="PRO" id="PR:Q07731"/>
<dbReference type="Proteomes" id="UP000002494">
    <property type="component" value="Unplaced"/>
</dbReference>
<dbReference type="GO" id="GO:0005576">
    <property type="term" value="C:extracellular region"/>
    <property type="evidence" value="ECO:0000250"/>
    <property type="project" value="UniProtKB"/>
</dbReference>
<dbReference type="GO" id="GO:0005615">
    <property type="term" value="C:extracellular space"/>
    <property type="evidence" value="ECO:0000314"/>
    <property type="project" value="RGD"/>
</dbReference>
<dbReference type="GO" id="GO:0005794">
    <property type="term" value="C:Golgi apparatus"/>
    <property type="evidence" value="ECO:0000266"/>
    <property type="project" value="RGD"/>
</dbReference>
<dbReference type="GO" id="GO:0043235">
    <property type="term" value="C:receptor complex"/>
    <property type="evidence" value="ECO:0000314"/>
    <property type="project" value="RGD"/>
</dbReference>
<dbReference type="GO" id="GO:0030116">
    <property type="term" value="F:glial cell-derived neurotrophic factor receptor binding"/>
    <property type="evidence" value="ECO:0000353"/>
    <property type="project" value="CAFA"/>
</dbReference>
<dbReference type="GO" id="GO:0008083">
    <property type="term" value="F:growth factor activity"/>
    <property type="evidence" value="ECO:0000314"/>
    <property type="project" value="RGD"/>
</dbReference>
<dbReference type="GO" id="GO:0042803">
    <property type="term" value="F:protein homodimerization activity"/>
    <property type="evidence" value="ECO:0000314"/>
    <property type="project" value="CAFA"/>
</dbReference>
<dbReference type="GO" id="GO:0048018">
    <property type="term" value="F:receptor ligand activity"/>
    <property type="evidence" value="ECO:0000315"/>
    <property type="project" value="CAFA"/>
</dbReference>
<dbReference type="GO" id="GO:0030971">
    <property type="term" value="F:receptor tyrosine kinase binding"/>
    <property type="evidence" value="ECO:0000353"/>
    <property type="project" value="CAFA"/>
</dbReference>
<dbReference type="GO" id="GO:0001658">
    <property type="term" value="P:branching involved in ureteric bud morphogenesis"/>
    <property type="evidence" value="ECO:0000250"/>
    <property type="project" value="UniProtKB"/>
</dbReference>
<dbReference type="GO" id="GO:0071549">
    <property type="term" value="P:cellular response to dexamethasone stimulus"/>
    <property type="evidence" value="ECO:0000314"/>
    <property type="project" value="UniProtKB"/>
</dbReference>
<dbReference type="GO" id="GO:0071679">
    <property type="term" value="P:commissural neuron axon guidance"/>
    <property type="evidence" value="ECO:0000266"/>
    <property type="project" value="RGD"/>
</dbReference>
<dbReference type="GO" id="GO:0021516">
    <property type="term" value="P:dorsal spinal cord development"/>
    <property type="evidence" value="ECO:0000266"/>
    <property type="project" value="RGD"/>
</dbReference>
<dbReference type="GO" id="GO:0048568">
    <property type="term" value="P:embryonic organ development"/>
    <property type="evidence" value="ECO:0000266"/>
    <property type="project" value="RGD"/>
</dbReference>
<dbReference type="GO" id="GO:0048484">
    <property type="term" value="P:enteric nervous system development"/>
    <property type="evidence" value="ECO:0000250"/>
    <property type="project" value="UniProtKB"/>
</dbReference>
<dbReference type="GO" id="GO:0035860">
    <property type="term" value="P:glial cell-derived neurotrophic factor receptor signaling pathway"/>
    <property type="evidence" value="ECO:0000250"/>
    <property type="project" value="UniProtKB"/>
</dbReference>
<dbReference type="GO" id="GO:0008584">
    <property type="term" value="P:male gonad development"/>
    <property type="evidence" value="ECO:0000270"/>
    <property type="project" value="RGD"/>
</dbReference>
<dbReference type="GO" id="GO:0003337">
    <property type="term" value="P:mesenchymal to epithelial transition involved in metanephros morphogenesis"/>
    <property type="evidence" value="ECO:0000314"/>
    <property type="project" value="UniProtKB"/>
</dbReference>
<dbReference type="GO" id="GO:0001656">
    <property type="term" value="P:metanephros development"/>
    <property type="evidence" value="ECO:0000250"/>
    <property type="project" value="UniProtKB"/>
</dbReference>
<dbReference type="GO" id="GO:0030901">
    <property type="term" value="P:midbrain development"/>
    <property type="evidence" value="ECO:0000270"/>
    <property type="project" value="RGD"/>
</dbReference>
<dbReference type="GO" id="GO:0048255">
    <property type="term" value="P:mRNA stabilization"/>
    <property type="evidence" value="ECO:0000250"/>
    <property type="project" value="UniProtKB"/>
</dbReference>
<dbReference type="GO" id="GO:2001240">
    <property type="term" value="P:negative regulation of extrinsic apoptotic signaling pathway in absence of ligand"/>
    <property type="evidence" value="ECO:0000266"/>
    <property type="project" value="RGD"/>
</dbReference>
<dbReference type="GO" id="GO:0034351">
    <property type="term" value="P:negative regulation of glial cell apoptotic process"/>
    <property type="evidence" value="ECO:0000315"/>
    <property type="project" value="RGD"/>
</dbReference>
<dbReference type="GO" id="GO:0032691">
    <property type="term" value="P:negative regulation of interleukin-1 beta production"/>
    <property type="evidence" value="ECO:0000315"/>
    <property type="project" value="RGD"/>
</dbReference>
<dbReference type="GO" id="GO:0043524">
    <property type="term" value="P:negative regulation of neuron apoptotic process"/>
    <property type="evidence" value="ECO:0000315"/>
    <property type="project" value="RGD"/>
</dbReference>
<dbReference type="GO" id="GO:0032720">
    <property type="term" value="P:negative regulation of tumor necrosis factor production"/>
    <property type="evidence" value="ECO:0000315"/>
    <property type="project" value="RGD"/>
</dbReference>
<dbReference type="GO" id="GO:0007399">
    <property type="term" value="P:nervous system development"/>
    <property type="evidence" value="ECO:0000266"/>
    <property type="project" value="RGD"/>
</dbReference>
<dbReference type="GO" id="GO:0001755">
    <property type="term" value="P:neural crest cell migration"/>
    <property type="evidence" value="ECO:0000250"/>
    <property type="project" value="UniProtKB"/>
</dbReference>
<dbReference type="GO" id="GO:0030182">
    <property type="term" value="P:neuron differentiation"/>
    <property type="evidence" value="ECO:0000314"/>
    <property type="project" value="RGD"/>
</dbReference>
<dbReference type="GO" id="GO:0031175">
    <property type="term" value="P:neuron projection development"/>
    <property type="evidence" value="ECO:0000250"/>
    <property type="project" value="UniProtKB"/>
</dbReference>
<dbReference type="GO" id="GO:0001759">
    <property type="term" value="P:organ induction"/>
    <property type="evidence" value="ECO:0000266"/>
    <property type="project" value="RGD"/>
</dbReference>
<dbReference type="GO" id="GO:0007422">
    <property type="term" value="P:peripheral nervous system development"/>
    <property type="evidence" value="ECO:0000266"/>
    <property type="project" value="RGD"/>
</dbReference>
<dbReference type="GO" id="GO:0030432">
    <property type="term" value="P:peristalsis"/>
    <property type="evidence" value="ECO:0000250"/>
    <property type="project" value="UniProtKB"/>
</dbReference>
<dbReference type="GO" id="GO:0090190">
    <property type="term" value="P:positive regulation of branching involved in ureteric bud morphogenesis"/>
    <property type="evidence" value="ECO:0000314"/>
    <property type="project" value="UniProtKB"/>
</dbReference>
<dbReference type="GO" id="GO:0045597">
    <property type="term" value="P:positive regulation of cell differentiation"/>
    <property type="evidence" value="ECO:0000266"/>
    <property type="project" value="RGD"/>
</dbReference>
<dbReference type="GO" id="GO:0008284">
    <property type="term" value="P:positive regulation of cell population proliferation"/>
    <property type="evidence" value="ECO:0000266"/>
    <property type="project" value="RGD"/>
</dbReference>
<dbReference type="GO" id="GO:0032733">
    <property type="term" value="P:positive regulation of interleukin-10 production"/>
    <property type="evidence" value="ECO:0000315"/>
    <property type="project" value="RGD"/>
</dbReference>
<dbReference type="GO" id="GO:0072108">
    <property type="term" value="P:positive regulation of mesenchymal to epithelial transition involved in metanephros morphogenesis"/>
    <property type="evidence" value="ECO:0000266"/>
    <property type="project" value="RGD"/>
</dbReference>
<dbReference type="GO" id="GO:0045666">
    <property type="term" value="P:positive regulation of neuron differentiation"/>
    <property type="evidence" value="ECO:0000315"/>
    <property type="project" value="RGD"/>
</dbReference>
<dbReference type="GO" id="GO:0050731">
    <property type="term" value="P:positive regulation of peptidyl-tyrosine phosphorylation"/>
    <property type="evidence" value="ECO:0000315"/>
    <property type="project" value="CAFA"/>
</dbReference>
<dbReference type="GO" id="GO:0051897">
    <property type="term" value="P:positive regulation of phosphatidylinositol 3-kinase/protein kinase B signal transduction"/>
    <property type="evidence" value="ECO:0000315"/>
    <property type="project" value="RGD"/>
</dbReference>
<dbReference type="GO" id="GO:0045944">
    <property type="term" value="P:positive regulation of transcription by RNA polymerase II"/>
    <property type="evidence" value="ECO:0000250"/>
    <property type="project" value="UniProtKB"/>
</dbReference>
<dbReference type="GO" id="GO:0072107">
    <property type="term" value="P:positive regulation of ureteric bud formation"/>
    <property type="evidence" value="ECO:0000250"/>
    <property type="project" value="UniProtKB"/>
</dbReference>
<dbReference type="GO" id="GO:0021784">
    <property type="term" value="P:postganglionic parasympathetic fiber development"/>
    <property type="evidence" value="ECO:0000250"/>
    <property type="project" value="UniProtKB"/>
</dbReference>
<dbReference type="GO" id="GO:0001941">
    <property type="term" value="P:postsynaptic membrane organization"/>
    <property type="evidence" value="ECO:0000266"/>
    <property type="project" value="RGD"/>
</dbReference>
<dbReference type="GO" id="GO:0051584">
    <property type="term" value="P:regulation of dopamine uptake involved in synaptic transmission"/>
    <property type="evidence" value="ECO:0000250"/>
    <property type="project" value="UniProtKB"/>
</dbReference>
<dbReference type="GO" id="GO:0010468">
    <property type="term" value="P:regulation of gene expression"/>
    <property type="evidence" value="ECO:0000266"/>
    <property type="project" value="RGD"/>
</dbReference>
<dbReference type="GO" id="GO:0060688">
    <property type="term" value="P:regulation of morphogenesis of a branching structure"/>
    <property type="evidence" value="ECO:0000250"/>
    <property type="project" value="UniProtKB"/>
</dbReference>
<dbReference type="GO" id="GO:2001260">
    <property type="term" value="P:regulation of semaphorin-plexin signaling pathway"/>
    <property type="evidence" value="ECO:0000266"/>
    <property type="project" value="RGD"/>
</dbReference>
<dbReference type="GO" id="GO:0072106">
    <property type="term" value="P:regulation of ureteric bud formation"/>
    <property type="evidence" value="ECO:0000314"/>
    <property type="project" value="UniProtKB"/>
</dbReference>
<dbReference type="GO" id="GO:0060041">
    <property type="term" value="P:retina development in camera-type eye"/>
    <property type="evidence" value="ECO:0000270"/>
    <property type="project" value="RGD"/>
</dbReference>
<dbReference type="GO" id="GO:0048485">
    <property type="term" value="P:sympathetic nervous system development"/>
    <property type="evidence" value="ECO:0000250"/>
    <property type="project" value="UniProtKB"/>
</dbReference>
<dbReference type="GO" id="GO:0001657">
    <property type="term" value="P:ureteric bud development"/>
    <property type="evidence" value="ECO:0000266"/>
    <property type="project" value="RGD"/>
</dbReference>
<dbReference type="GO" id="GO:0060676">
    <property type="term" value="P:ureteric bud formation"/>
    <property type="evidence" value="ECO:0000266"/>
    <property type="project" value="RGD"/>
</dbReference>
<dbReference type="CDD" id="cd19380">
    <property type="entry name" value="TGF_beta_GDNF"/>
    <property type="match status" value="1"/>
</dbReference>
<dbReference type="DisProt" id="DP00029"/>
<dbReference type="FunFam" id="2.10.90.10:FF:000015">
    <property type="entry name" value="Glial cell line-derived neurotrophic factor"/>
    <property type="match status" value="1"/>
</dbReference>
<dbReference type="Gene3D" id="2.10.90.10">
    <property type="entry name" value="Cystine-knot cytokines"/>
    <property type="match status" value="1"/>
</dbReference>
<dbReference type="InterPro" id="IPR029034">
    <property type="entry name" value="Cystine-knot_cytokine"/>
</dbReference>
<dbReference type="InterPro" id="IPR016649">
    <property type="entry name" value="GDNF"/>
</dbReference>
<dbReference type="InterPro" id="IPR043401">
    <property type="entry name" value="GDNF_fam"/>
</dbReference>
<dbReference type="InterPro" id="IPR047020">
    <property type="entry name" value="GDNF_TGF-b-like"/>
</dbReference>
<dbReference type="InterPro" id="IPR001839">
    <property type="entry name" value="TGF-b_C"/>
</dbReference>
<dbReference type="PANTHER" id="PTHR12173">
    <property type="entry name" value="GDNF SUBFAMILY OF TGF-BETA FAMILY"/>
    <property type="match status" value="1"/>
</dbReference>
<dbReference type="PANTHER" id="PTHR12173:SF1">
    <property type="entry name" value="GLIAL CELL LINE-DERIVED NEUROTROPHIC FACTOR"/>
    <property type="match status" value="1"/>
</dbReference>
<dbReference type="Pfam" id="PF00019">
    <property type="entry name" value="TGF_beta"/>
    <property type="match status" value="1"/>
</dbReference>
<dbReference type="PIRSF" id="PIRSF016238">
    <property type="entry name" value="GDNF"/>
    <property type="match status" value="1"/>
</dbReference>
<dbReference type="SUPFAM" id="SSF57501">
    <property type="entry name" value="Cystine-knot cytokines"/>
    <property type="match status" value="1"/>
</dbReference>
<dbReference type="PROSITE" id="PS51362">
    <property type="entry name" value="TGF_BETA_2"/>
    <property type="match status" value="1"/>
</dbReference>
<feature type="signal peptide" evidence="2">
    <location>
        <begin position="1"/>
        <end position="19"/>
    </location>
</feature>
<feature type="propeptide" id="PRO_0000034008" evidence="13">
    <location>
        <begin position="20"/>
        <end position="75"/>
    </location>
</feature>
<feature type="chain" id="PRO_0000034009" description="Glial cell line-derived neurotrophic factor" evidence="13">
    <location>
        <begin position="78"/>
        <end position="211"/>
    </location>
</feature>
<feature type="region of interest" description="Disordered" evidence="3">
    <location>
        <begin position="76"/>
        <end position="113"/>
    </location>
</feature>
<feature type="glycosylation site" description="N-linked (GlcNAc...) asparagine" evidence="2">
    <location>
        <position position="126"/>
    </location>
</feature>
<feature type="glycosylation site" description="N-linked (GlcNAc...) asparagine" evidence="2">
    <location>
        <position position="162"/>
    </location>
</feature>
<feature type="disulfide bond" evidence="8">
    <location>
        <begin position="118"/>
        <end position="179"/>
    </location>
</feature>
<feature type="disulfide bond" evidence="8">
    <location>
        <begin position="145"/>
        <end position="208"/>
    </location>
</feature>
<feature type="disulfide bond" evidence="8">
    <location>
        <begin position="149"/>
        <end position="210"/>
    </location>
</feature>
<feature type="disulfide bond" description="Interchain" evidence="8">
    <location>
        <position position="178"/>
    </location>
</feature>
<feature type="splice variant" id="VSP_026365" description="In isoform 3." evidence="9">
    <location>
        <begin position="1"/>
        <end position="52"/>
    </location>
</feature>
<feature type="splice variant" id="VSP_026366" description="In isoform 4." evidence="12">
    <original>MKLWDVVAVCLVLLHTASAF</original>
    <variation>MGFGPLGVNVQLGVYGDRIR</variation>
    <location>
        <begin position="1"/>
        <end position="20"/>
    </location>
</feature>
<feature type="splice variant" id="VSP_006422" description="In isoform 2." evidence="9 10 11">
    <original>GKRLLEAPAEDHSLGHRRVPFALTSDS</original>
    <variation>A</variation>
    <location>
        <begin position="25"/>
        <end position="51"/>
    </location>
</feature>
<feature type="sequence conflict" description="In Ref. 2; AAB33891/AAB33892." evidence="12" ref="2">
    <original>R</original>
    <variation>S</variation>
    <location>
        <position position="77"/>
    </location>
</feature>
<feature type="sequence conflict" description="In Ref. 2; AAB33891/AAB33892." evidence="12" ref="2">
    <original>E</original>
    <variation>K</variation>
    <location>
        <position position="90"/>
    </location>
</feature>
<feature type="sequence conflict" description="In Ref. 3; AAF23767." evidence="12" ref="3">
    <original>Q</original>
    <variation>L</variation>
    <location>
        <position position="94"/>
    </location>
</feature>
<feature type="sequence conflict" description="In Ref. 1; AA sequence." evidence="12" ref="1">
    <original>E</original>
    <variation>D</variation>
    <location>
        <position position="101"/>
    </location>
</feature>
<feature type="strand" evidence="14">
    <location>
        <begin position="118"/>
        <end position="126"/>
    </location>
</feature>
<feature type="helix" evidence="14">
    <location>
        <begin position="127"/>
        <end position="130"/>
    </location>
</feature>
<feature type="strand" evidence="14">
    <location>
        <begin position="139"/>
        <end position="147"/>
    </location>
</feature>
<feature type="helix" evidence="14">
    <location>
        <begin position="155"/>
        <end position="166"/>
    </location>
</feature>
<feature type="strand" evidence="14">
    <location>
        <begin position="178"/>
        <end position="184"/>
    </location>
</feature>
<feature type="strand" evidence="14">
    <location>
        <begin position="188"/>
        <end position="191"/>
    </location>
</feature>
<feature type="strand" evidence="14">
    <location>
        <begin position="197"/>
        <end position="200"/>
    </location>
</feature>
<feature type="strand" evidence="14">
    <location>
        <begin position="204"/>
        <end position="211"/>
    </location>
</feature>
<name>GDNF_RAT</name>
<keyword id="KW-0002">3D-structure</keyword>
<keyword id="KW-0025">Alternative splicing</keyword>
<keyword id="KW-0165">Cleavage on pair of basic residues</keyword>
<keyword id="KW-0903">Direct protein sequencing</keyword>
<keyword id="KW-1015">Disulfide bond</keyword>
<keyword id="KW-0325">Glycoprotein</keyword>
<keyword id="KW-0339">Growth factor</keyword>
<keyword id="KW-1185">Reference proteome</keyword>
<keyword id="KW-0964">Secreted</keyword>
<keyword id="KW-0732">Signal</keyword>